<organism>
    <name type="scientific">Rubella virus (strain Cendehill)</name>
    <name type="common">RUBV</name>
    <dbReference type="NCBI Taxonomy" id="376266"/>
    <lineage>
        <taxon>Viruses</taxon>
        <taxon>Riboviria</taxon>
        <taxon>Orthornavirae</taxon>
        <taxon>Kitrinoviricota</taxon>
        <taxon>Alsuviricetes</taxon>
        <taxon>Hepelivirales</taxon>
        <taxon>Matonaviridae</taxon>
        <taxon>Rubivirus</taxon>
        <taxon>Rubivirus rubellae</taxon>
    </lineage>
</organism>
<dbReference type="EMBL" id="AF188704">
    <property type="protein sequence ID" value="AAF26710.1"/>
    <property type="molecule type" value="Genomic_RNA"/>
</dbReference>
<dbReference type="SMR" id="Q9J6K8"/>
<dbReference type="IntAct" id="Q9J6K8">
    <property type="interactions" value="2"/>
</dbReference>
<dbReference type="Proteomes" id="UP000008176">
    <property type="component" value="Genome"/>
</dbReference>
<dbReference type="GO" id="GO:0044178">
    <property type="term" value="C:host cell Golgi membrane"/>
    <property type="evidence" value="ECO:0007669"/>
    <property type="project" value="UniProtKB-SubCell"/>
</dbReference>
<dbReference type="GO" id="GO:0033650">
    <property type="term" value="C:host cell mitochondrion"/>
    <property type="evidence" value="ECO:0007669"/>
    <property type="project" value="UniProtKB-SubCell"/>
</dbReference>
<dbReference type="GO" id="GO:0016020">
    <property type="term" value="C:membrane"/>
    <property type="evidence" value="ECO:0007669"/>
    <property type="project" value="UniProtKB-KW"/>
</dbReference>
<dbReference type="GO" id="GO:0039619">
    <property type="term" value="C:T=4 icosahedral viral capsid"/>
    <property type="evidence" value="ECO:0007669"/>
    <property type="project" value="UniProtKB-KW"/>
</dbReference>
<dbReference type="GO" id="GO:0019031">
    <property type="term" value="C:viral envelope"/>
    <property type="evidence" value="ECO:0007669"/>
    <property type="project" value="UniProtKB-KW"/>
</dbReference>
<dbReference type="GO" id="GO:0019013">
    <property type="term" value="C:viral nucleocapsid"/>
    <property type="evidence" value="ECO:0007669"/>
    <property type="project" value="InterPro"/>
</dbReference>
<dbReference type="GO" id="GO:0055036">
    <property type="term" value="C:virion membrane"/>
    <property type="evidence" value="ECO:0007669"/>
    <property type="project" value="UniProtKB-SubCell"/>
</dbReference>
<dbReference type="GO" id="GO:0046872">
    <property type="term" value="F:metal ion binding"/>
    <property type="evidence" value="ECO:0007669"/>
    <property type="project" value="UniProtKB-KW"/>
</dbReference>
<dbReference type="GO" id="GO:0003723">
    <property type="term" value="F:RNA binding"/>
    <property type="evidence" value="ECO:0007669"/>
    <property type="project" value="UniProtKB-KW"/>
</dbReference>
<dbReference type="GO" id="GO:0075512">
    <property type="term" value="P:clathrin-dependent endocytosis of virus by host cell"/>
    <property type="evidence" value="ECO:0007669"/>
    <property type="project" value="UniProtKB-KW"/>
</dbReference>
<dbReference type="GO" id="GO:0039654">
    <property type="term" value="P:fusion of virus membrane with host endosome membrane"/>
    <property type="evidence" value="ECO:0007669"/>
    <property type="project" value="UniProtKB-KW"/>
</dbReference>
<dbReference type="GO" id="GO:0019062">
    <property type="term" value="P:virion attachment to host cell"/>
    <property type="evidence" value="ECO:0007669"/>
    <property type="project" value="UniProtKB-KW"/>
</dbReference>
<dbReference type="Gene3D" id="2.60.98.30">
    <property type="entry name" value="Rubella membrane glycoprotein E1, domain 1"/>
    <property type="match status" value="1"/>
</dbReference>
<dbReference type="Gene3D" id="3.30.67.20">
    <property type="entry name" value="Rubella membrane glycoprotein E1, domain 2"/>
    <property type="match status" value="2"/>
</dbReference>
<dbReference type="Gene3D" id="2.60.40.2650">
    <property type="entry name" value="Rubella membrane glycoprotein E1, domain 3"/>
    <property type="match status" value="1"/>
</dbReference>
<dbReference type="Gene3D" id="3.10.50.50">
    <property type="entry name" value="Rubella virus capsid protein"/>
    <property type="match status" value="1"/>
</dbReference>
<dbReference type="InterPro" id="IPR008819">
    <property type="entry name" value="Rubella_Capsid"/>
</dbReference>
<dbReference type="InterPro" id="IPR043106">
    <property type="entry name" value="Rubella_Capsid_sf"/>
</dbReference>
<dbReference type="InterPro" id="IPR008820">
    <property type="entry name" value="Rubella_E1"/>
</dbReference>
<dbReference type="InterPro" id="IPR042500">
    <property type="entry name" value="Rubella_E1_1"/>
</dbReference>
<dbReference type="InterPro" id="IPR042498">
    <property type="entry name" value="Rubella_E1_2"/>
</dbReference>
<dbReference type="InterPro" id="IPR042499">
    <property type="entry name" value="Rubella_E1_3"/>
</dbReference>
<dbReference type="InterPro" id="IPR008821">
    <property type="entry name" value="Rubella_E2"/>
</dbReference>
<dbReference type="Pfam" id="PF05750">
    <property type="entry name" value="Rubella_Capsid"/>
    <property type="match status" value="1"/>
</dbReference>
<dbReference type="Pfam" id="PF05748">
    <property type="entry name" value="Rubella_E1"/>
    <property type="match status" value="1"/>
</dbReference>
<dbReference type="Pfam" id="PF05749">
    <property type="entry name" value="Rubella_E2"/>
    <property type="match status" value="1"/>
</dbReference>
<accession>Q9J6K8</accession>
<name>POLS_RUBVD</name>
<keyword id="KW-0106">Calcium</keyword>
<keyword id="KW-0167">Capsid protein</keyword>
<keyword id="KW-1165">Clathrin-mediated endocytosis of virus by host</keyword>
<keyword id="KW-1015">Disulfide bond</keyword>
<keyword id="KW-1170">Fusion of virus membrane with host endosomal membrane</keyword>
<keyword id="KW-1168">Fusion of virus membrane with host membrane</keyword>
<keyword id="KW-0325">Glycoprotein</keyword>
<keyword id="KW-1035">Host cytoplasm</keyword>
<keyword id="KW-1040">Host Golgi apparatus</keyword>
<keyword id="KW-1043">Host membrane</keyword>
<keyword id="KW-1045">Host mitochondrion</keyword>
<keyword id="KW-0945">Host-virus interaction</keyword>
<keyword id="KW-0449">Lipoprotein</keyword>
<keyword id="KW-0472">Membrane</keyword>
<keyword id="KW-0479">Metal-binding</keyword>
<keyword id="KW-0564">Palmitate</keyword>
<keyword id="KW-0597">Phosphoprotein</keyword>
<keyword id="KW-0694">RNA-binding</keyword>
<keyword id="KW-1144">T=4 icosahedral capsid protein</keyword>
<keyword id="KW-0812">Transmembrane</keyword>
<keyword id="KW-1133">Transmembrane helix</keyword>
<keyword id="KW-1161">Viral attachment to host cell</keyword>
<keyword id="KW-0261">Viral envelope protein</keyword>
<keyword id="KW-1162">Viral penetration into host cytoplasm</keyword>
<keyword id="KW-0946">Virion</keyword>
<keyword id="KW-1164">Virus endocytosis by host</keyword>
<keyword id="KW-1160">Virus entry into host cell</keyword>
<comment type="function">
    <molecule>Capsid protein</molecule>
    <text evidence="3">Capsid protein interacts with genomic RNA and assembles into icosahedric core particles 65-70 nm in diameter. The resulting nucleocapsid eventually associates with the cytoplasmic domain of E2 at the cell membrane, leading to budding and formation of mature virions from host Golgi membranes. Phosphorylation negatively regulates RNA-binding activity, possibly delaying virion assembly during the viral replication phase. Capsid protein dimerizes and becomes disulfide-linked in the virion. Modulates genomic RNA replication. Modulates subgenomic RNA synthesis by interacting with human C1QBP/SF2P32. Induces both perinuclear clustering of mitochondria and the formation of electron-dense intermitochondrial plaques, both hallmarks of rubella virus infected cells. Induces apoptosis when expressed in transfected cells.</text>
</comment>
<comment type="function">
    <molecule>Spike glycoprotein E2</molecule>
    <text evidence="3">Responsible for viral attachment to target host cell, by binding to the cell receptor. Its transport to the plasma membrane depends on interaction with E1 protein. The surface glycoproteins display an irregular helical organization and a pseudo-tetrameric inner nucleocapsid arrangement.</text>
</comment>
<comment type="function">
    <molecule>Spike glycoprotein E1</molecule>
    <text evidence="2 3">Class II viral fusion protein (By similarity). Fusion activity is inactive as long as E1 is bound to E2 in mature virion. After virus attachment to target cell and clathrin-mediated endocytosis, acidification of the endosome would induce dissociation of E1/E2 heterodimer and concomitant trimerization of the E1 subunits (By similarity). This E1 homotrimer is fusion active, and promotes release of viral nucleocapsid in cytoplasm after endosome and viral membrane fusion. The cytoplasmic tail of spike glycoprotein E1 modulates virus release. The surface glycoproteins display an irregular helical organization and a pseudo-tetrameric inner nucleocapsid arrangement (By similarity).</text>
</comment>
<comment type="subunit">
    <molecule>Capsid protein</molecule>
    <text evidence="3">Homodimer; further assembles into homooligomer. Interacts with human C1QBP. Interacts (via N-terminus) with protease/methyltransferase p150.</text>
</comment>
<comment type="subunit">
    <molecule>Spike glycoprotein E1</molecule>
    <text evidence="3">Heterodimer with spike glycoprotein E2.</text>
</comment>
<comment type="subunit">
    <molecule>Spike glycoprotein E2</molecule>
    <text evidence="3">Heterodimer with spike glycoprotein E1.</text>
</comment>
<comment type="subcellular location">
    <molecule>Capsid protein</molecule>
    <subcellularLocation>
        <location evidence="3">Virion</location>
    </subcellularLocation>
    <subcellularLocation>
        <location>Host cytoplasm</location>
    </subcellularLocation>
    <subcellularLocation>
        <location evidence="3">Host mitochondrion</location>
    </subcellularLocation>
    <text evidence="3">The capsid protein is concentrated around Golgi region (By similarity). In the virion, it is probably associated to the viral membrane (By similarity).</text>
</comment>
<comment type="subcellular location">
    <molecule>Spike glycoprotein E2</molecule>
    <subcellularLocation>
        <location evidence="3">Virion membrane</location>
        <topology evidence="3">Single-pass type I membrane protein</topology>
    </subcellularLocation>
    <subcellularLocation>
        <location evidence="3">Host Golgi apparatus membrane</location>
        <topology evidence="3">Single-pass type I membrane protein</topology>
    </subcellularLocation>
    <text evidence="3">E1 and E2 form heterodimer in the endoplasmic reticulum before they are transported to and retained in the Golgi complex, where virus assembly occurs. E1 possesses an endoplasmic reticulum retention signal, and unassembled E2 and E1 subunits are retained in the endoplasmic reticulum. Presumably, assembly of E2 and E1 would mask the signal, thereby allowing transport of the heterodimer to the Golgi complex.</text>
</comment>
<comment type="subcellular location">
    <molecule>Spike glycoprotein E1</molecule>
    <subcellularLocation>
        <location evidence="3">Virion membrane</location>
        <topology evidence="3">Single-pass type I membrane protein</topology>
    </subcellularLocation>
    <subcellularLocation>
        <location evidence="3">Host Golgi apparatus membrane</location>
        <topology evidence="3">Single-pass type I membrane protein</topology>
    </subcellularLocation>
    <text evidence="3">E1 and E2 form heterodimer in the endoplasmic reticulum before they are transported to and retained in the Golgi complex, where virus assembly occurs. E1 possesses an endoplasmic reticulum retention signal, and unassembled E2 and E1 subunits are retained in the endoplasmic reticulum. Presumably, assembly of E2 and E1 would mask the signal, thereby allowing transport of the heterodimer to the Golgi complex.</text>
</comment>
<comment type="domain">
    <text evidence="3">Structural polyprotein: Contains two internal signal peptides that are necessary for directing translocation of the glycoproteins into the lumen of the endoplasmic reticulum.</text>
</comment>
<comment type="domain">
    <molecule>Capsid protein</molecule>
    <text evidence="3">The capsid protein is probably attached to the viral membrane through the E2 signal peptide. This domain is also required for the localization of the capsid protein to the juxtanuclear region and subsequent virus assembly at the Golgi complex.</text>
</comment>
<comment type="PTM">
    <text evidence="3">Structural polyprotein: Specific enzymatic cleavages in vivo yield mature proteins. Two signal peptidase-mediated cleavages within the polyprotein produce the structural proteins capsid, E2, and E1. The E2 signal peptide remains attached to the C-terminus of the capsid protein after cleavage by the signal peptidase. Another signal peptide at E2 C-terminus directs E1 to the ER, with a similar mechanism.</text>
</comment>
<comment type="PTM">
    <molecule>Spike glycoprotein E1</molecule>
    <text evidence="3">Contains three N-linked oligosaccharides.</text>
</comment>
<comment type="PTM">
    <text evidence="1 3">Capsid is phosphorylated on Ser-46 by host. This phosphorylation negatively regulates capsid protein RNA-binding activity (By similarity). Dephosphorylated by human PP1A (By similarity).</text>
</comment>
<comment type="miscellaneous">
    <text evidence="3">Structural polyprotein: Translated from a subgenomic RNA synthesized during togaviruses replication.</text>
</comment>
<protein>
    <recommendedName>
        <fullName>Structural polyprotein</fullName>
    </recommendedName>
    <alternativeName>
        <fullName>p110</fullName>
    </alternativeName>
    <component>
        <recommendedName>
            <fullName>Capsid protein</fullName>
        </recommendedName>
        <alternativeName>
            <fullName>Coat protein</fullName>
            <shortName>C</shortName>
        </alternativeName>
    </component>
    <component>
        <recommendedName>
            <fullName>Spike glycoprotein E2</fullName>
        </recommendedName>
        <alternativeName>
            <fullName>E2 envelope glycoprotein</fullName>
        </alternativeName>
    </component>
    <component>
        <recommendedName>
            <fullName>Spike glycoprotein E1</fullName>
        </recommendedName>
        <alternativeName>
            <fullName>E1 envelope glycoprotein</fullName>
        </alternativeName>
    </component>
</protein>
<evidence type="ECO:0000250" key="1"/>
<evidence type="ECO:0000250" key="2">
    <source>
        <dbReference type="UniProtKB" id="P07566"/>
    </source>
</evidence>
<evidence type="ECO:0000250" key="3">
    <source>
        <dbReference type="UniProtKB" id="P08563"/>
    </source>
</evidence>
<evidence type="ECO:0000255" key="4"/>
<evidence type="ECO:0000256" key="5">
    <source>
        <dbReference type="SAM" id="MobiDB-lite"/>
    </source>
</evidence>
<proteinExistence type="inferred from homology"/>
<reference key="1">
    <citation type="journal article" date="2000" name="J. Virol.">
        <title>Mapping of genetic determinants of rubella virus associated with growth in joint tissue.</title>
        <authorList>
            <person name="Lund K.D."/>
            <person name="Chantler J.K."/>
        </authorList>
    </citation>
    <scope>NUCLEOTIDE SEQUENCE [GENOMIC RNA]</scope>
</reference>
<feature type="chain" id="PRO_0000238990" description="Capsid protein">
    <location>
        <begin position="1"/>
        <end position="300"/>
    </location>
</feature>
<feature type="chain" id="PRO_0000238991" description="Spike glycoprotein E2">
    <location>
        <begin position="301"/>
        <end position="582"/>
    </location>
</feature>
<feature type="chain" id="PRO_0000238992" description="Spike glycoprotein E1">
    <location>
        <begin position="583"/>
        <end position="1063"/>
    </location>
</feature>
<feature type="topological domain" description="Extracellular" evidence="4">
    <location>
        <begin position="301"/>
        <end position="534"/>
    </location>
</feature>
<feature type="transmembrane region" description="Helical; Note=Golgi retention signal" evidence="3">
    <location>
        <begin position="535"/>
        <end position="555"/>
    </location>
</feature>
<feature type="topological domain" description="Cytoplasmic" evidence="4">
    <location>
        <begin position="556"/>
        <end position="582"/>
    </location>
</feature>
<feature type="topological domain" description="Extracellular" evidence="4">
    <location>
        <begin position="583"/>
        <end position="1028"/>
    </location>
</feature>
<feature type="transmembrane region" description="Helical; Note=Endoplasmic reticulum retention signal" evidence="3">
    <location>
        <begin position="1029"/>
        <end position="1049"/>
    </location>
</feature>
<feature type="topological domain" description="Extracellular" evidence="4">
    <location>
        <begin position="1050"/>
        <end position="1063"/>
    </location>
</feature>
<feature type="region of interest" description="Disordered" evidence="5">
    <location>
        <begin position="1"/>
        <end position="131"/>
    </location>
</feature>
<feature type="region of interest" description="Human C1QBP/SF2P32-binding" evidence="3">
    <location>
        <begin position="30"/>
        <end position="69"/>
    </location>
</feature>
<feature type="region of interest" description="Functions as E2 signal peptide" evidence="3">
    <location>
        <begin position="279"/>
        <end position="300"/>
    </location>
</feature>
<feature type="region of interest" description="Functions as E1 signal peptide" evidence="3">
    <location>
        <begin position="563"/>
        <end position="582"/>
    </location>
</feature>
<feature type="compositionally biased region" description="Basic residues" evidence="5">
    <location>
        <begin position="59"/>
        <end position="69"/>
    </location>
</feature>
<feature type="compositionally biased region" description="Basic and acidic residues" evidence="5">
    <location>
        <begin position="70"/>
        <end position="87"/>
    </location>
</feature>
<feature type="compositionally biased region" description="Pro residues" evidence="5">
    <location>
        <begin position="93"/>
        <end position="107"/>
    </location>
</feature>
<feature type="binding site" evidence="3">
    <location>
        <position position="670"/>
    </location>
    <ligand>
        <name>Ca(2+)</name>
        <dbReference type="ChEBI" id="CHEBI:29108"/>
    </ligand>
</feature>
<feature type="binding site" evidence="3">
    <location>
        <position position="671"/>
    </location>
    <ligand>
        <name>Ca(2+)</name>
        <dbReference type="ChEBI" id="CHEBI:29108"/>
    </ligand>
</feature>
<feature type="binding site" evidence="3">
    <location>
        <position position="718"/>
    </location>
    <ligand>
        <name>Ca(2+)</name>
        <dbReference type="ChEBI" id="CHEBI:29108"/>
    </ligand>
</feature>
<feature type="binding site" evidence="3">
    <location>
        <position position="719"/>
    </location>
    <ligand>
        <name>Ca(2+)</name>
        <dbReference type="ChEBI" id="CHEBI:29108"/>
    </ligand>
</feature>
<feature type="site" description="Cleavage; by host signal peptidase" evidence="4">
    <location>
        <begin position="300"/>
        <end position="301"/>
    </location>
</feature>
<feature type="site" description="Cleavage; by host signal peptidase" evidence="4">
    <location>
        <begin position="582"/>
        <end position="583"/>
    </location>
</feature>
<feature type="modified residue" description="Phosphoserine; by host" evidence="3">
    <location>
        <position position="46"/>
    </location>
</feature>
<feature type="glycosylation site" description="N-linked (GlcNAc...) asparagine; by host" evidence="4">
    <location>
        <position position="353"/>
    </location>
</feature>
<feature type="glycosylation site" description="N-linked (GlcNAc...) asparagine; by host" evidence="4">
    <location>
        <position position="371"/>
    </location>
</feature>
<feature type="glycosylation site" description="N-linked (GlcNAc...) asparagine; by host" evidence="4">
    <location>
        <position position="429"/>
    </location>
</feature>
<feature type="glycosylation site" description="N-linked (GlcNAc...) asparagine; by host" evidence="3">
    <location>
        <position position="658"/>
    </location>
</feature>
<feature type="glycosylation site" description="N-linked (GlcNAc...) asparagine; by host" evidence="3">
    <location>
        <position position="791"/>
    </location>
</feature>
<feature type="glycosylation site" description="O-linked (GalNAc...) threonine; by host" evidence="3">
    <location>
        <position position="1011"/>
    </location>
</feature>
<feature type="glycosylation site" description="O-linked (GalNAc...) threonine; by host" evidence="3">
    <location>
        <position position="1012"/>
    </location>
</feature>
<feature type="disulfide bond" evidence="3">
    <location>
        <begin position="153"/>
        <end position="197"/>
    </location>
</feature>
<feature type="disulfide bond" evidence="2">
    <location>
        <begin position="590"/>
        <end position="595"/>
    </location>
</feature>
<feature type="disulfide bond" evidence="2">
    <location>
        <begin position="619"/>
        <end position="824"/>
    </location>
</feature>
<feature type="disulfide bond" evidence="2">
    <location>
        <begin position="641"/>
        <end position="653"/>
    </location>
</feature>
<feature type="disulfide bond" evidence="2">
    <location>
        <begin position="699"/>
        <end position="712"/>
    </location>
</feature>
<feature type="disulfide bond" evidence="2">
    <location>
        <begin position="758"/>
        <end position="767"/>
    </location>
</feature>
<feature type="disulfide bond" evidence="2">
    <location>
        <begin position="807"/>
        <end position="817"/>
    </location>
</feature>
<feature type="disulfide bond" evidence="2">
    <location>
        <begin position="931"/>
        <end position="934"/>
    </location>
</feature>
<feature type="disulfide bond" evidence="2">
    <location>
        <begin position="950"/>
        <end position="983"/>
    </location>
</feature>
<organismHost>
    <name type="scientific">Homo sapiens</name>
    <name type="common">Human</name>
    <dbReference type="NCBI Taxonomy" id="9606"/>
</organismHost>
<sequence>MASTTPITMEDLQKALEAQSRALRAELAAGASQPRRPRPPRQRDSSTSGDDSGRDSGGPRRRRGNRGRGQRKDWSRAPPPPEERQEGRSQTPAPKPSRAPPQQPQPPRMQTGRGGSAPRPELGPPTNPFQAAVARGLRPPLHDPDTEAPTEACVTSWLWSEGEGAVFYRVDLHFTNLGTPPLDEDGRWDPALMYNPCGPEPPAHVVRAYNQPAGDVRGVWGKGERTYAEQDFRVGGTRWHRLLRMPVRGLDGDSAPLPPHTTERIETRSARHPWRIRFGAPQAFLAGLLLAAVAVGTARAGLQPRVDMAAPPTPPQPPRAHGQHYGHHHHQLPFLGHDGHHGGTLRVGQHHRNASDVLPGHWLQGGWGCYNLSDWHQGTHVCHTKHMDFWCVEHDRPPPATPTPLTTAANSITAATPATAPAPCHAGLNDSCGGFLSGCGPMRLRHGADTRCGRLICGLSTTAQYPPTRFGCAMRWGLPPWELVVLTARPEDGWTCRGVPAHPGTRCPELVSPMGRATCSPASALWLATANALSLDHALAAFVLLVPWVLIFMVCRRACRRRGAAAALTAVVLQGYNPPAYGEEAFTYLCTAPGCATQTPVPVRLAGVRFESKIVDGGCFAPWDLEATGACICEIPTDVSCEGLGAWVPTAPCARIWNGTQRACTFWAVNAYSSGGYAQLASYFNPGGSYYKQYHPTACEVEPAFGHSDAACWGFPTDTVMSVFALASYVQHPHKTVRVKFHTETRTVWQLSVAGVSCDVTTEHPFCNTPHGQLEVQVPPDPGDMVEYIMNYTGNQQSRWGLGSPNCHGPDWASPVCQRHSPDCSRLVGATPERPRLRLVDADDPLLRTAPGPGEVWVTPVIGSQARKCGLHIRAGPYGHATVEMPEWIHAHTTSDPWHPPGPLGLKFKTVRPVTLPRALAPPRNVRVTGCYQCGTPALVEGLAPGGGNCHLTVNGEDVGAFPPGKFVTAALLNTPPPYQVSCGGESDRASARVIDPAAQSFTGVVYGTHTTAVSETRQTWAEWAAAHWWQLTLGAICALPLAGLLACCAKCLYYLRGAIAPR</sequence>